<name>SELU_SALPC</name>
<dbReference type="EC" id="2.9.1.3" evidence="1"/>
<dbReference type="EMBL" id="CP000857">
    <property type="protein sequence ID" value="ACN44708.1"/>
    <property type="molecule type" value="Genomic_DNA"/>
</dbReference>
<dbReference type="SMR" id="C0PVG5"/>
<dbReference type="KEGG" id="sei:SPC_0528"/>
<dbReference type="HOGENOM" id="CLU_043456_1_0_6"/>
<dbReference type="Proteomes" id="UP000001599">
    <property type="component" value="Chromosome"/>
</dbReference>
<dbReference type="GO" id="GO:0016765">
    <property type="term" value="F:transferase activity, transferring alkyl or aryl (other than methyl) groups"/>
    <property type="evidence" value="ECO:0007669"/>
    <property type="project" value="UniProtKB-UniRule"/>
</dbReference>
<dbReference type="GO" id="GO:0043828">
    <property type="term" value="F:tRNA 2-selenouridine synthase activity"/>
    <property type="evidence" value="ECO:0007669"/>
    <property type="project" value="UniProtKB-EC"/>
</dbReference>
<dbReference type="GO" id="GO:0002098">
    <property type="term" value="P:tRNA wobble uridine modification"/>
    <property type="evidence" value="ECO:0007669"/>
    <property type="project" value="UniProtKB-UniRule"/>
</dbReference>
<dbReference type="CDD" id="cd01520">
    <property type="entry name" value="RHOD_YbbB"/>
    <property type="match status" value="1"/>
</dbReference>
<dbReference type="FunFam" id="3.40.250.10:FF:000009">
    <property type="entry name" value="tRNA 2-selenouridine/geranyl-2-thiouridine synthase"/>
    <property type="match status" value="1"/>
</dbReference>
<dbReference type="Gene3D" id="3.40.250.10">
    <property type="entry name" value="Rhodanese-like domain"/>
    <property type="match status" value="1"/>
</dbReference>
<dbReference type="HAMAP" id="MF_01622">
    <property type="entry name" value="tRNA_sel_U_synth"/>
    <property type="match status" value="1"/>
</dbReference>
<dbReference type="InterPro" id="IPR001763">
    <property type="entry name" value="Rhodanese-like_dom"/>
</dbReference>
<dbReference type="InterPro" id="IPR036873">
    <property type="entry name" value="Rhodanese-like_dom_sf"/>
</dbReference>
<dbReference type="InterPro" id="IPR017582">
    <property type="entry name" value="SelU"/>
</dbReference>
<dbReference type="NCBIfam" id="NF008749">
    <property type="entry name" value="PRK11784.1-1"/>
    <property type="match status" value="1"/>
</dbReference>
<dbReference type="NCBIfam" id="NF008751">
    <property type="entry name" value="PRK11784.1-3"/>
    <property type="match status" value="1"/>
</dbReference>
<dbReference type="NCBIfam" id="TIGR03167">
    <property type="entry name" value="tRNA_sel_U_synt"/>
    <property type="match status" value="1"/>
</dbReference>
<dbReference type="PANTHER" id="PTHR30401">
    <property type="entry name" value="TRNA 2-SELENOURIDINE SYNTHASE"/>
    <property type="match status" value="1"/>
</dbReference>
<dbReference type="PANTHER" id="PTHR30401:SF0">
    <property type="entry name" value="TRNA 2-SELENOURIDINE SYNTHASE"/>
    <property type="match status" value="1"/>
</dbReference>
<dbReference type="Pfam" id="PF00581">
    <property type="entry name" value="Rhodanese"/>
    <property type="match status" value="1"/>
</dbReference>
<dbReference type="SMART" id="SM00450">
    <property type="entry name" value="RHOD"/>
    <property type="match status" value="1"/>
</dbReference>
<dbReference type="SUPFAM" id="SSF52821">
    <property type="entry name" value="Rhodanese/Cell cycle control phosphatase"/>
    <property type="match status" value="1"/>
</dbReference>
<dbReference type="PROSITE" id="PS50206">
    <property type="entry name" value="RHODANESE_3"/>
    <property type="match status" value="1"/>
</dbReference>
<organism>
    <name type="scientific">Salmonella paratyphi C (strain RKS4594)</name>
    <dbReference type="NCBI Taxonomy" id="476213"/>
    <lineage>
        <taxon>Bacteria</taxon>
        <taxon>Pseudomonadati</taxon>
        <taxon>Pseudomonadota</taxon>
        <taxon>Gammaproteobacteria</taxon>
        <taxon>Enterobacterales</taxon>
        <taxon>Enterobacteriaceae</taxon>
        <taxon>Salmonella</taxon>
    </lineage>
</organism>
<sequence>MQDRQKAQDYRALLLADTPLIDVRAPIEFEQGAMPGAINLPLMMDDERAAVGTCYKRQGADAALALGHRLVCGDIRQQRLEAWKAAYQRFPNGYLCCARGGQRSHIVQRWLQETGIDCPLIEGGYKALRQTAIQATWQLAQKPILLIGGCTGSGKTQLVRQQPNGVDLEGLARHRGSSFGRTLNPQLSQASFENKLAVELLKINARQTLKRWVLEDEGRTIGANHLPECLRERMAQAPIAVVEDPFALRLERLREEYFIRMHHDFTHAYGDEAGWQAYSEYLHHGLFAIRRRLGLQRFAELTDTLDRALAEQLSSGSTDGHMAWLVPLLNEYYDPMYRYQLEKKAANIVFRGPWQDVANWLKAQ</sequence>
<keyword id="KW-0711">Selenium</keyword>
<keyword id="KW-0808">Transferase</keyword>
<gene>
    <name evidence="1" type="primary">selU</name>
    <name type="ordered locus">SPC_0528</name>
</gene>
<reference key="1">
    <citation type="journal article" date="2009" name="PLoS ONE">
        <title>Salmonella paratyphi C: genetic divergence from Salmonella choleraesuis and pathogenic convergence with Salmonella typhi.</title>
        <authorList>
            <person name="Liu W.-Q."/>
            <person name="Feng Y."/>
            <person name="Wang Y."/>
            <person name="Zou Q.-H."/>
            <person name="Chen F."/>
            <person name="Guo J.-T."/>
            <person name="Peng Y.-H."/>
            <person name="Jin Y."/>
            <person name="Li Y.-G."/>
            <person name="Hu S.-N."/>
            <person name="Johnston R.N."/>
            <person name="Liu G.-R."/>
            <person name="Liu S.-L."/>
        </authorList>
    </citation>
    <scope>NUCLEOTIDE SEQUENCE [LARGE SCALE GENOMIC DNA]</scope>
    <source>
        <strain>RKS4594</strain>
    </source>
</reference>
<proteinExistence type="inferred from homology"/>
<comment type="function">
    <text evidence="1">Involved in the post-transcriptional modification of the uridine at the wobble position (U34) of tRNA(Lys), tRNA(Glu) and tRNA(Gln). Catalyzes the conversion of 2-thiouridine (S2U-RNA) to 2-selenouridine (Se2U-RNA). Acts in a two-step process involving geranylation of 2-thiouridine (S2U) to S-geranyl-2-thiouridine (geS2U) and subsequent selenation of the latter derivative to 2-selenouridine (Se2U) in the tRNA chain.</text>
</comment>
<comment type="catalytic activity">
    <reaction evidence="1">
        <text>5-methylaminomethyl-2-thiouridine(34) in tRNA + selenophosphate + (2E)-geranyl diphosphate + H2O + H(+) = 5-methylaminomethyl-2-selenouridine(34) in tRNA + (2E)-thiogeraniol + phosphate + diphosphate</text>
        <dbReference type="Rhea" id="RHEA:42716"/>
        <dbReference type="Rhea" id="RHEA-COMP:10195"/>
        <dbReference type="Rhea" id="RHEA-COMP:10196"/>
        <dbReference type="ChEBI" id="CHEBI:15377"/>
        <dbReference type="ChEBI" id="CHEBI:15378"/>
        <dbReference type="ChEBI" id="CHEBI:16144"/>
        <dbReference type="ChEBI" id="CHEBI:33019"/>
        <dbReference type="ChEBI" id="CHEBI:43474"/>
        <dbReference type="ChEBI" id="CHEBI:58057"/>
        <dbReference type="ChEBI" id="CHEBI:74455"/>
        <dbReference type="ChEBI" id="CHEBI:82743"/>
        <dbReference type="ChEBI" id="CHEBI:143703"/>
        <dbReference type="EC" id="2.9.1.3"/>
    </reaction>
    <physiologicalReaction direction="left-to-right" evidence="1">
        <dbReference type="Rhea" id="RHEA:42717"/>
    </physiologicalReaction>
</comment>
<comment type="catalytic activity">
    <reaction evidence="1">
        <text>5-methylaminomethyl-2-thiouridine(34) in tRNA + (2E)-geranyl diphosphate = 5-methylaminomethyl-S-(2E)-geranyl-thiouridine(34) in tRNA + diphosphate</text>
        <dbReference type="Rhea" id="RHEA:14085"/>
        <dbReference type="Rhea" id="RHEA-COMP:10195"/>
        <dbReference type="Rhea" id="RHEA-COMP:14654"/>
        <dbReference type="ChEBI" id="CHEBI:33019"/>
        <dbReference type="ChEBI" id="CHEBI:58057"/>
        <dbReference type="ChEBI" id="CHEBI:74455"/>
        <dbReference type="ChEBI" id="CHEBI:140632"/>
    </reaction>
    <physiologicalReaction direction="left-to-right" evidence="1">
        <dbReference type="Rhea" id="RHEA:14086"/>
    </physiologicalReaction>
</comment>
<comment type="catalytic activity">
    <reaction evidence="1">
        <text>5-methylaminomethyl-S-(2E)-geranyl-thiouridine(34) in tRNA + selenophosphate + H(+) = 5-methylaminomethyl-2-(Se-phospho)selenouridine(34) in tRNA + (2E)-thiogeraniol</text>
        <dbReference type="Rhea" id="RHEA:60172"/>
        <dbReference type="Rhea" id="RHEA-COMP:14654"/>
        <dbReference type="Rhea" id="RHEA-COMP:15523"/>
        <dbReference type="ChEBI" id="CHEBI:15378"/>
        <dbReference type="ChEBI" id="CHEBI:16144"/>
        <dbReference type="ChEBI" id="CHEBI:140632"/>
        <dbReference type="ChEBI" id="CHEBI:143702"/>
        <dbReference type="ChEBI" id="CHEBI:143703"/>
    </reaction>
    <physiologicalReaction direction="left-to-right" evidence="1">
        <dbReference type="Rhea" id="RHEA:60173"/>
    </physiologicalReaction>
</comment>
<comment type="catalytic activity">
    <reaction evidence="1">
        <text>5-methylaminomethyl-2-(Se-phospho)selenouridine(34) in tRNA + H2O = 5-methylaminomethyl-2-selenouridine(34) in tRNA + phosphate</text>
        <dbReference type="Rhea" id="RHEA:60176"/>
        <dbReference type="Rhea" id="RHEA-COMP:10196"/>
        <dbReference type="Rhea" id="RHEA-COMP:15523"/>
        <dbReference type="ChEBI" id="CHEBI:15377"/>
        <dbReference type="ChEBI" id="CHEBI:43474"/>
        <dbReference type="ChEBI" id="CHEBI:82743"/>
        <dbReference type="ChEBI" id="CHEBI:143702"/>
    </reaction>
    <physiologicalReaction direction="left-to-right" evidence="1">
        <dbReference type="Rhea" id="RHEA:60177"/>
    </physiologicalReaction>
</comment>
<comment type="subunit">
    <text evidence="1">Monomer.</text>
</comment>
<comment type="similarity">
    <text evidence="1">Belongs to the SelU family.</text>
</comment>
<protein>
    <recommendedName>
        <fullName evidence="1">tRNA 2-selenouridine synthase</fullName>
        <ecNumber evidence="1">2.9.1.3</ecNumber>
    </recommendedName>
</protein>
<evidence type="ECO:0000255" key="1">
    <source>
        <dbReference type="HAMAP-Rule" id="MF_01622"/>
    </source>
</evidence>
<feature type="chain" id="PRO_1000186085" description="tRNA 2-selenouridine synthase">
    <location>
        <begin position="1"/>
        <end position="364"/>
    </location>
</feature>
<feature type="domain" description="Rhodanese" evidence="1">
    <location>
        <begin position="14"/>
        <end position="137"/>
    </location>
</feature>
<feature type="active site" description="S-selanylcysteine intermediate" evidence="1">
    <location>
        <position position="97"/>
    </location>
</feature>
<accession>C0PVG5</accession>